<reference key="1">
    <citation type="journal article" date="2006" name="J. Bacteriol.">
        <title>Whole-genome sequence of Listeria welshimeri reveals common steps in genome reduction with Listeria innocua as compared to Listeria monocytogenes.</title>
        <authorList>
            <person name="Hain T."/>
            <person name="Steinweg C."/>
            <person name="Kuenne C.T."/>
            <person name="Billion A."/>
            <person name="Ghai R."/>
            <person name="Chatterjee S.S."/>
            <person name="Domann E."/>
            <person name="Kaerst U."/>
            <person name="Goesmann A."/>
            <person name="Bekel T."/>
            <person name="Bartels D."/>
            <person name="Kaiser O."/>
            <person name="Meyer F."/>
            <person name="Puehler A."/>
            <person name="Weisshaar B."/>
            <person name="Wehland J."/>
            <person name="Liang C."/>
            <person name="Dandekar T."/>
            <person name="Lampidis R."/>
            <person name="Kreft J."/>
            <person name="Goebel W."/>
            <person name="Chakraborty T."/>
        </authorList>
    </citation>
    <scope>NUCLEOTIDE SEQUENCE [LARGE SCALE GENOMIC DNA]</scope>
    <source>
        <strain>ATCC 35897 / DSM 20650 / CCUG 15529 / CIP 8149 / NCTC 11857 / SLCC 5334 / V8</strain>
    </source>
</reference>
<dbReference type="EC" id="2.7.1.50" evidence="1"/>
<dbReference type="EMBL" id="AM263198">
    <property type="protein sequence ID" value="CAK19705.1"/>
    <property type="molecule type" value="Genomic_DNA"/>
</dbReference>
<dbReference type="RefSeq" id="WP_011701143.1">
    <property type="nucleotide sequence ID" value="NC_008555.1"/>
</dbReference>
<dbReference type="SMR" id="A0AFC3"/>
<dbReference type="STRING" id="386043.lwe0287"/>
<dbReference type="GeneID" id="61188180"/>
<dbReference type="KEGG" id="lwe:lwe0287"/>
<dbReference type="eggNOG" id="COG2145">
    <property type="taxonomic scope" value="Bacteria"/>
</dbReference>
<dbReference type="HOGENOM" id="CLU_019943_0_0_9"/>
<dbReference type="OrthoDB" id="9778146at2"/>
<dbReference type="UniPathway" id="UPA00060">
    <property type="reaction ID" value="UER00139"/>
</dbReference>
<dbReference type="Proteomes" id="UP000000779">
    <property type="component" value="Chromosome"/>
</dbReference>
<dbReference type="GO" id="GO:0005524">
    <property type="term" value="F:ATP binding"/>
    <property type="evidence" value="ECO:0007669"/>
    <property type="project" value="UniProtKB-UniRule"/>
</dbReference>
<dbReference type="GO" id="GO:0004417">
    <property type="term" value="F:hydroxyethylthiazole kinase activity"/>
    <property type="evidence" value="ECO:0007669"/>
    <property type="project" value="UniProtKB-UniRule"/>
</dbReference>
<dbReference type="GO" id="GO:0000287">
    <property type="term" value="F:magnesium ion binding"/>
    <property type="evidence" value="ECO:0007669"/>
    <property type="project" value="UniProtKB-UniRule"/>
</dbReference>
<dbReference type="GO" id="GO:0009228">
    <property type="term" value="P:thiamine biosynthetic process"/>
    <property type="evidence" value="ECO:0007669"/>
    <property type="project" value="UniProtKB-KW"/>
</dbReference>
<dbReference type="GO" id="GO:0009229">
    <property type="term" value="P:thiamine diphosphate biosynthetic process"/>
    <property type="evidence" value="ECO:0007669"/>
    <property type="project" value="UniProtKB-UniRule"/>
</dbReference>
<dbReference type="CDD" id="cd01170">
    <property type="entry name" value="THZ_kinase"/>
    <property type="match status" value="1"/>
</dbReference>
<dbReference type="Gene3D" id="3.40.1190.20">
    <property type="match status" value="1"/>
</dbReference>
<dbReference type="HAMAP" id="MF_00228">
    <property type="entry name" value="Thz_kinase"/>
    <property type="match status" value="1"/>
</dbReference>
<dbReference type="InterPro" id="IPR000417">
    <property type="entry name" value="Hyethyz_kinase"/>
</dbReference>
<dbReference type="InterPro" id="IPR029056">
    <property type="entry name" value="Ribokinase-like"/>
</dbReference>
<dbReference type="NCBIfam" id="NF006830">
    <property type="entry name" value="PRK09355.1"/>
    <property type="match status" value="1"/>
</dbReference>
<dbReference type="NCBIfam" id="TIGR00694">
    <property type="entry name" value="thiM"/>
    <property type="match status" value="1"/>
</dbReference>
<dbReference type="Pfam" id="PF02110">
    <property type="entry name" value="HK"/>
    <property type="match status" value="1"/>
</dbReference>
<dbReference type="PIRSF" id="PIRSF000513">
    <property type="entry name" value="Thz_kinase"/>
    <property type="match status" value="1"/>
</dbReference>
<dbReference type="PRINTS" id="PR01099">
    <property type="entry name" value="HYETHTZKNASE"/>
</dbReference>
<dbReference type="SUPFAM" id="SSF53613">
    <property type="entry name" value="Ribokinase-like"/>
    <property type="match status" value="1"/>
</dbReference>
<sequence length="269" mass="28399">MFDFMTLEKVQERGPLVHNITNIVVANDSANGLLAIGASPIMASAKQEMDELAKMADVLVINIGMLDGELVEAMKIAGRAANFAETQVVLDPVGVGATSYRRKVVQELLAEIQFAAIRGNAGELAAIAGEAWEAKGVDAGVGSADVLAIAEKVAKEWNTVVIISGEVDVISDGTRFAKVANGSALLPRITGSGCLLSAVCGSFIAVQDDVFRASVEACVSYAVASEYAEMELERKLPGSFRPLFLDALASWSVEKTRAKAKILESGEHK</sequence>
<name>THIM_LISW6</name>
<protein>
    <recommendedName>
        <fullName evidence="1">Hydroxyethylthiazole kinase</fullName>
        <ecNumber evidence="1">2.7.1.50</ecNumber>
    </recommendedName>
    <alternativeName>
        <fullName evidence="1">4-methyl-5-beta-hydroxyethylthiazole kinase</fullName>
        <shortName evidence="1">TH kinase</shortName>
        <shortName evidence="1">Thz kinase</shortName>
    </alternativeName>
</protein>
<feature type="chain" id="PRO_1000021518" description="Hydroxyethylthiazole kinase">
    <location>
        <begin position="1"/>
        <end position="269"/>
    </location>
</feature>
<feature type="binding site" evidence="1">
    <location>
        <position position="42"/>
    </location>
    <ligand>
        <name>substrate</name>
    </ligand>
</feature>
<feature type="binding site" evidence="1">
    <location>
        <position position="118"/>
    </location>
    <ligand>
        <name>ATP</name>
        <dbReference type="ChEBI" id="CHEBI:30616"/>
    </ligand>
</feature>
<feature type="binding site" evidence="1">
    <location>
        <position position="164"/>
    </location>
    <ligand>
        <name>ATP</name>
        <dbReference type="ChEBI" id="CHEBI:30616"/>
    </ligand>
</feature>
<feature type="binding site" evidence="1">
    <location>
        <position position="191"/>
    </location>
    <ligand>
        <name>substrate</name>
    </ligand>
</feature>
<proteinExistence type="inferred from homology"/>
<comment type="function">
    <text evidence="1">Catalyzes the phosphorylation of the hydroxyl group of 4-methyl-5-beta-hydroxyethylthiazole (THZ).</text>
</comment>
<comment type="catalytic activity">
    <reaction evidence="1">
        <text>5-(2-hydroxyethyl)-4-methylthiazole + ATP = 4-methyl-5-(2-phosphooxyethyl)-thiazole + ADP + H(+)</text>
        <dbReference type="Rhea" id="RHEA:24212"/>
        <dbReference type="ChEBI" id="CHEBI:15378"/>
        <dbReference type="ChEBI" id="CHEBI:17957"/>
        <dbReference type="ChEBI" id="CHEBI:30616"/>
        <dbReference type="ChEBI" id="CHEBI:58296"/>
        <dbReference type="ChEBI" id="CHEBI:456216"/>
        <dbReference type="EC" id="2.7.1.50"/>
    </reaction>
</comment>
<comment type="cofactor">
    <cofactor evidence="1">
        <name>Mg(2+)</name>
        <dbReference type="ChEBI" id="CHEBI:18420"/>
    </cofactor>
</comment>
<comment type="pathway">
    <text evidence="1">Cofactor biosynthesis; thiamine diphosphate biosynthesis; 4-methyl-5-(2-phosphoethyl)-thiazole from 5-(2-hydroxyethyl)-4-methylthiazole: step 1/1.</text>
</comment>
<comment type="similarity">
    <text evidence="1">Belongs to the Thz kinase family.</text>
</comment>
<keyword id="KW-0067">ATP-binding</keyword>
<keyword id="KW-0418">Kinase</keyword>
<keyword id="KW-0460">Magnesium</keyword>
<keyword id="KW-0479">Metal-binding</keyword>
<keyword id="KW-0547">Nucleotide-binding</keyword>
<keyword id="KW-0784">Thiamine biosynthesis</keyword>
<keyword id="KW-0808">Transferase</keyword>
<gene>
    <name evidence="1" type="primary">thiM</name>
    <name type="ordered locus">lwe0287</name>
</gene>
<accession>A0AFC3</accession>
<organism>
    <name type="scientific">Listeria welshimeri serovar 6b (strain ATCC 35897 / DSM 20650 / CCUG 15529 / CIP 8149 / NCTC 11857 / SLCC 5334 / V8)</name>
    <dbReference type="NCBI Taxonomy" id="386043"/>
    <lineage>
        <taxon>Bacteria</taxon>
        <taxon>Bacillati</taxon>
        <taxon>Bacillota</taxon>
        <taxon>Bacilli</taxon>
        <taxon>Bacillales</taxon>
        <taxon>Listeriaceae</taxon>
        <taxon>Listeria</taxon>
    </lineage>
</organism>
<evidence type="ECO:0000255" key="1">
    <source>
        <dbReference type="HAMAP-Rule" id="MF_00228"/>
    </source>
</evidence>